<proteinExistence type="inferred from homology"/>
<dbReference type="EC" id="3.1.2.6" evidence="1"/>
<dbReference type="EMBL" id="AM286280">
    <property type="protein sequence ID" value="CAL09421.1"/>
    <property type="molecule type" value="Genomic_DNA"/>
</dbReference>
<dbReference type="RefSeq" id="WP_003022214.1">
    <property type="nucleotide sequence ID" value="NC_008245.1"/>
</dbReference>
<dbReference type="SMR" id="Q14GJ6"/>
<dbReference type="KEGG" id="ftf:FTF1405c"/>
<dbReference type="HOGENOM" id="CLU_030571_4_1_6"/>
<dbReference type="UniPathway" id="UPA00619">
    <property type="reaction ID" value="UER00676"/>
</dbReference>
<dbReference type="GO" id="GO:0004416">
    <property type="term" value="F:hydroxyacylglutathione hydrolase activity"/>
    <property type="evidence" value="ECO:0007669"/>
    <property type="project" value="UniProtKB-UniRule"/>
</dbReference>
<dbReference type="GO" id="GO:0046872">
    <property type="term" value="F:metal ion binding"/>
    <property type="evidence" value="ECO:0007669"/>
    <property type="project" value="UniProtKB-KW"/>
</dbReference>
<dbReference type="GO" id="GO:0019243">
    <property type="term" value="P:methylglyoxal catabolic process to D-lactate via S-lactoyl-glutathione"/>
    <property type="evidence" value="ECO:0007669"/>
    <property type="project" value="InterPro"/>
</dbReference>
<dbReference type="CDD" id="cd07723">
    <property type="entry name" value="hydroxyacylglutathione_hydrolase_MBL-fold"/>
    <property type="match status" value="1"/>
</dbReference>
<dbReference type="Gene3D" id="3.60.15.10">
    <property type="entry name" value="Ribonuclease Z/Hydroxyacylglutathione hydrolase-like"/>
    <property type="match status" value="1"/>
</dbReference>
<dbReference type="HAMAP" id="MF_01374">
    <property type="entry name" value="Glyoxalase_2"/>
    <property type="match status" value="1"/>
</dbReference>
<dbReference type="InterPro" id="IPR035680">
    <property type="entry name" value="Clx_II_MBL"/>
</dbReference>
<dbReference type="InterPro" id="IPR050110">
    <property type="entry name" value="Glyoxalase_II_hydrolase"/>
</dbReference>
<dbReference type="InterPro" id="IPR032282">
    <property type="entry name" value="HAGH_C"/>
</dbReference>
<dbReference type="InterPro" id="IPR017782">
    <property type="entry name" value="Hydroxyacylglutathione_Hdrlase"/>
</dbReference>
<dbReference type="InterPro" id="IPR001279">
    <property type="entry name" value="Metallo-B-lactamas"/>
</dbReference>
<dbReference type="InterPro" id="IPR036866">
    <property type="entry name" value="RibonucZ/Hydroxyglut_hydro"/>
</dbReference>
<dbReference type="PANTHER" id="PTHR43705">
    <property type="entry name" value="HYDROXYACYLGLUTATHIONE HYDROLASE"/>
    <property type="match status" value="1"/>
</dbReference>
<dbReference type="PANTHER" id="PTHR43705:SF1">
    <property type="entry name" value="HYDROXYACYLGLUTATHIONE HYDROLASE GLOB"/>
    <property type="match status" value="1"/>
</dbReference>
<dbReference type="Pfam" id="PF16123">
    <property type="entry name" value="HAGH_C"/>
    <property type="match status" value="1"/>
</dbReference>
<dbReference type="Pfam" id="PF00753">
    <property type="entry name" value="Lactamase_B"/>
    <property type="match status" value="1"/>
</dbReference>
<dbReference type="SMART" id="SM00849">
    <property type="entry name" value="Lactamase_B"/>
    <property type="match status" value="1"/>
</dbReference>
<dbReference type="SUPFAM" id="SSF56281">
    <property type="entry name" value="Metallo-hydrolase/oxidoreductase"/>
    <property type="match status" value="1"/>
</dbReference>
<protein>
    <recommendedName>
        <fullName evidence="1">Hydroxyacylglutathione hydrolase</fullName>
        <ecNumber evidence="1">3.1.2.6</ecNumber>
    </recommendedName>
    <alternativeName>
        <fullName evidence="1">Glyoxalase II</fullName>
        <shortName evidence="1">Glx II</shortName>
    </alternativeName>
</protein>
<organism>
    <name type="scientific">Francisella tularensis subsp. tularensis (strain FSC 198)</name>
    <dbReference type="NCBI Taxonomy" id="393115"/>
    <lineage>
        <taxon>Bacteria</taxon>
        <taxon>Pseudomonadati</taxon>
        <taxon>Pseudomonadota</taxon>
        <taxon>Gammaproteobacteria</taxon>
        <taxon>Thiotrichales</taxon>
        <taxon>Francisellaceae</taxon>
        <taxon>Francisella</taxon>
    </lineage>
</organism>
<accession>Q14GJ6</accession>
<sequence length="252" mass="28849">MQIKRWFLNNSLRNYQYLLYDKSHAIVIDPLKSDIFAEFIAKNKLQLEAILITHKHGDHIAGVKKLLAIYLNAKVYAYTGNDLFKPDIYVKDGSFINLGFTSFRVMYIPGHIDDHVCFLFEQERALFCGDTLFNAGVGGVQAESADINQLYDSLVKITKLDGDIKPYPAHDYWLGNLDFALSILADDSYFNYYRNQVAELAAEDKPIVNLAEEAKLNIFIRAMSDKALLKALPDYSLGREMFVKLRQLKNNF</sequence>
<keyword id="KW-0378">Hydrolase</keyword>
<keyword id="KW-0479">Metal-binding</keyword>
<keyword id="KW-0862">Zinc</keyword>
<reference key="1">
    <citation type="journal article" date="2007" name="PLoS ONE">
        <title>Genome sequencing shows that European isolates of Francisella tularensis subspecies tularensis are almost identical to US laboratory strain Schu S4.</title>
        <authorList>
            <person name="Chaudhuri R.R."/>
            <person name="Ren C.-P."/>
            <person name="Desmond L."/>
            <person name="Vincent G.A."/>
            <person name="Silman N.J."/>
            <person name="Brehm J.K."/>
            <person name="Elmore M.J."/>
            <person name="Hudson M.J."/>
            <person name="Forsman M."/>
            <person name="Isherwood K.E."/>
            <person name="Gurycova D."/>
            <person name="Minton N.P."/>
            <person name="Titball R.W."/>
            <person name="Pallen M.J."/>
            <person name="Vipond R."/>
        </authorList>
    </citation>
    <scope>NUCLEOTIDE SEQUENCE [LARGE SCALE GENOMIC DNA]</scope>
    <source>
        <strain>FSC 198</strain>
    </source>
</reference>
<feature type="chain" id="PRO_0000309645" description="Hydroxyacylglutathione hydrolase">
    <location>
        <begin position="1"/>
        <end position="252"/>
    </location>
</feature>
<feature type="binding site" evidence="1">
    <location>
        <position position="54"/>
    </location>
    <ligand>
        <name>Zn(2+)</name>
        <dbReference type="ChEBI" id="CHEBI:29105"/>
        <label>1</label>
    </ligand>
</feature>
<feature type="binding site" evidence="1">
    <location>
        <position position="56"/>
    </location>
    <ligand>
        <name>Zn(2+)</name>
        <dbReference type="ChEBI" id="CHEBI:29105"/>
        <label>1</label>
    </ligand>
</feature>
<feature type="binding site" evidence="1">
    <location>
        <position position="58"/>
    </location>
    <ligand>
        <name>Zn(2+)</name>
        <dbReference type="ChEBI" id="CHEBI:29105"/>
        <label>2</label>
    </ligand>
</feature>
<feature type="binding site" evidence="1">
    <location>
        <position position="59"/>
    </location>
    <ligand>
        <name>Zn(2+)</name>
        <dbReference type="ChEBI" id="CHEBI:29105"/>
        <label>2</label>
    </ligand>
</feature>
<feature type="binding site" evidence="1">
    <location>
        <position position="111"/>
    </location>
    <ligand>
        <name>Zn(2+)</name>
        <dbReference type="ChEBI" id="CHEBI:29105"/>
        <label>1</label>
    </ligand>
</feature>
<feature type="binding site" evidence="1">
    <location>
        <position position="130"/>
    </location>
    <ligand>
        <name>Zn(2+)</name>
        <dbReference type="ChEBI" id="CHEBI:29105"/>
        <label>1</label>
    </ligand>
</feature>
<feature type="binding site" evidence="1">
    <location>
        <position position="130"/>
    </location>
    <ligand>
        <name>Zn(2+)</name>
        <dbReference type="ChEBI" id="CHEBI:29105"/>
        <label>2</label>
    </ligand>
</feature>
<feature type="binding site" evidence="1">
    <location>
        <position position="170"/>
    </location>
    <ligand>
        <name>Zn(2+)</name>
        <dbReference type="ChEBI" id="CHEBI:29105"/>
        <label>2</label>
    </ligand>
</feature>
<gene>
    <name evidence="1" type="primary">gloB</name>
    <name type="ordered locus">FTF1405c</name>
</gene>
<comment type="function">
    <text evidence="1">Thiolesterase that catalyzes the hydrolysis of S-D-lactoyl-glutathione to form glutathione and D-lactic acid.</text>
</comment>
<comment type="catalytic activity">
    <reaction evidence="1">
        <text>an S-(2-hydroxyacyl)glutathione + H2O = a 2-hydroxy carboxylate + glutathione + H(+)</text>
        <dbReference type="Rhea" id="RHEA:21864"/>
        <dbReference type="ChEBI" id="CHEBI:15377"/>
        <dbReference type="ChEBI" id="CHEBI:15378"/>
        <dbReference type="ChEBI" id="CHEBI:57925"/>
        <dbReference type="ChEBI" id="CHEBI:58896"/>
        <dbReference type="ChEBI" id="CHEBI:71261"/>
        <dbReference type="EC" id="3.1.2.6"/>
    </reaction>
</comment>
<comment type="cofactor">
    <cofactor evidence="1">
        <name>Zn(2+)</name>
        <dbReference type="ChEBI" id="CHEBI:29105"/>
    </cofactor>
    <text evidence="1">Binds 2 Zn(2+) ions per subunit.</text>
</comment>
<comment type="pathway">
    <text evidence="1">Secondary metabolite metabolism; methylglyoxal degradation; (R)-lactate from methylglyoxal: step 2/2.</text>
</comment>
<comment type="subunit">
    <text evidence="1">Monomer.</text>
</comment>
<comment type="similarity">
    <text evidence="1">Belongs to the metallo-beta-lactamase superfamily. Glyoxalase II family.</text>
</comment>
<evidence type="ECO:0000255" key="1">
    <source>
        <dbReference type="HAMAP-Rule" id="MF_01374"/>
    </source>
</evidence>
<name>GLO2_FRAT1</name>